<accession>Q8D992</accession>
<comment type="function">
    <text evidence="1">Specifically methylates the cytosine at position 1962 (m5C1962) of 23S rRNA.</text>
</comment>
<comment type="catalytic activity">
    <reaction evidence="1">
        <text>cytidine(1962) in 23S rRNA + S-adenosyl-L-methionine = 5-methylcytidine(1962) in 23S rRNA + S-adenosyl-L-homocysteine + H(+)</text>
        <dbReference type="Rhea" id="RHEA:42912"/>
        <dbReference type="Rhea" id="RHEA-COMP:10382"/>
        <dbReference type="Rhea" id="RHEA-COMP:10386"/>
        <dbReference type="ChEBI" id="CHEBI:15378"/>
        <dbReference type="ChEBI" id="CHEBI:57856"/>
        <dbReference type="ChEBI" id="CHEBI:59789"/>
        <dbReference type="ChEBI" id="CHEBI:74483"/>
        <dbReference type="ChEBI" id="CHEBI:82748"/>
        <dbReference type="EC" id="2.1.1.191"/>
    </reaction>
</comment>
<comment type="subcellular location">
    <subcellularLocation>
        <location evidence="1">Cytoplasm</location>
    </subcellularLocation>
</comment>
<comment type="similarity">
    <text evidence="1">Belongs to the methyltransferase superfamily. RlmI family.</text>
</comment>
<name>RLMI_VIBVU</name>
<feature type="chain" id="PRO_0000366277" description="Ribosomal RNA large subunit methyltransferase I">
    <location>
        <begin position="1"/>
        <end position="397"/>
    </location>
</feature>
<feature type="domain" description="PUA" evidence="1">
    <location>
        <begin position="2"/>
        <end position="80"/>
    </location>
</feature>
<protein>
    <recommendedName>
        <fullName evidence="1">Ribosomal RNA large subunit methyltransferase I</fullName>
        <ecNumber evidence="1">2.1.1.191</ecNumber>
    </recommendedName>
    <alternativeName>
        <fullName evidence="1">23S rRNA m5C1962 methyltransferase</fullName>
    </alternativeName>
    <alternativeName>
        <fullName evidence="1">rRNA (cytosine-C(5)-)-methyltransferase RlmI</fullName>
    </alternativeName>
</protein>
<dbReference type="EC" id="2.1.1.191" evidence="1"/>
<dbReference type="EMBL" id="AE016795">
    <property type="protein sequence ID" value="AAO11058.1"/>
    <property type="molecule type" value="Genomic_DNA"/>
</dbReference>
<dbReference type="RefSeq" id="WP_011080553.1">
    <property type="nucleotide sequence ID" value="NC_004459.3"/>
</dbReference>
<dbReference type="SMR" id="Q8D992"/>
<dbReference type="KEGG" id="vvu:VV1_2713"/>
<dbReference type="HOGENOM" id="CLU_014042_0_0_6"/>
<dbReference type="Proteomes" id="UP000002275">
    <property type="component" value="Chromosome 1"/>
</dbReference>
<dbReference type="GO" id="GO:0005737">
    <property type="term" value="C:cytoplasm"/>
    <property type="evidence" value="ECO:0007669"/>
    <property type="project" value="UniProtKB-SubCell"/>
</dbReference>
<dbReference type="GO" id="GO:0003723">
    <property type="term" value="F:RNA binding"/>
    <property type="evidence" value="ECO:0007669"/>
    <property type="project" value="UniProtKB-KW"/>
</dbReference>
<dbReference type="GO" id="GO:0016434">
    <property type="term" value="F:rRNA (cytosine) methyltransferase activity"/>
    <property type="evidence" value="ECO:0007669"/>
    <property type="project" value="UniProtKB-UniRule"/>
</dbReference>
<dbReference type="CDD" id="cd02440">
    <property type="entry name" value="AdoMet_MTases"/>
    <property type="match status" value="1"/>
</dbReference>
<dbReference type="CDD" id="cd21153">
    <property type="entry name" value="PUA_RlmI"/>
    <property type="match status" value="1"/>
</dbReference>
<dbReference type="CDD" id="cd11572">
    <property type="entry name" value="RlmI_M_like"/>
    <property type="match status" value="1"/>
</dbReference>
<dbReference type="Gene3D" id="2.30.130.10">
    <property type="entry name" value="PUA domain"/>
    <property type="match status" value="1"/>
</dbReference>
<dbReference type="Gene3D" id="3.30.750.80">
    <property type="entry name" value="RNA methyltransferase domain (HRMD) like"/>
    <property type="match status" value="1"/>
</dbReference>
<dbReference type="Gene3D" id="3.40.50.150">
    <property type="entry name" value="Vaccinia Virus protein VP39"/>
    <property type="match status" value="1"/>
</dbReference>
<dbReference type="HAMAP" id="MF_01857">
    <property type="entry name" value="23SrRNA_methyltr_I"/>
    <property type="match status" value="1"/>
</dbReference>
<dbReference type="InterPro" id="IPR002478">
    <property type="entry name" value="PUA"/>
</dbReference>
<dbReference type="InterPro" id="IPR015947">
    <property type="entry name" value="PUA-like_sf"/>
</dbReference>
<dbReference type="InterPro" id="IPR036974">
    <property type="entry name" value="PUA_sf"/>
</dbReference>
<dbReference type="InterPro" id="IPR023542">
    <property type="entry name" value="RLMI"/>
</dbReference>
<dbReference type="InterPro" id="IPR041532">
    <property type="entry name" value="RlmI-like_PUA"/>
</dbReference>
<dbReference type="InterPro" id="IPR019614">
    <property type="entry name" value="SAM-dep_methyl-trfase"/>
</dbReference>
<dbReference type="InterPro" id="IPR029063">
    <property type="entry name" value="SAM-dependent_MTases_sf"/>
</dbReference>
<dbReference type="PANTHER" id="PTHR42873">
    <property type="entry name" value="RIBOSOMAL RNA LARGE SUBUNIT METHYLTRANSFERASE"/>
    <property type="match status" value="1"/>
</dbReference>
<dbReference type="PANTHER" id="PTHR42873:SF1">
    <property type="entry name" value="S-ADENOSYLMETHIONINE-DEPENDENT METHYLTRANSFERASE DOMAIN-CONTAINING PROTEIN"/>
    <property type="match status" value="1"/>
</dbReference>
<dbReference type="Pfam" id="PF10672">
    <property type="entry name" value="Methyltrans_SAM"/>
    <property type="match status" value="1"/>
</dbReference>
<dbReference type="Pfam" id="PF17785">
    <property type="entry name" value="PUA_3"/>
    <property type="match status" value="1"/>
</dbReference>
<dbReference type="SMART" id="SM00359">
    <property type="entry name" value="PUA"/>
    <property type="match status" value="1"/>
</dbReference>
<dbReference type="SUPFAM" id="SSF88697">
    <property type="entry name" value="PUA domain-like"/>
    <property type="match status" value="1"/>
</dbReference>
<dbReference type="SUPFAM" id="SSF53335">
    <property type="entry name" value="S-adenosyl-L-methionine-dependent methyltransferases"/>
    <property type="match status" value="1"/>
</dbReference>
<dbReference type="PROSITE" id="PS50890">
    <property type="entry name" value="PUA"/>
    <property type="match status" value="1"/>
</dbReference>
<sequence>MSAAIYLVKGREKSVVRRHPWIFSRGIDRVEGNPQLGETVDVYGHDGKWLAKAAYSPESQIRARVWSFEKQDINRAFFVKRIQDAQLLREDVIERDGLTGYRLIAAESDGMPGVTIDRYQNFFVCQLLSAGAEHQKQNIVDALIEVFPDCNVYERSDVSVRKKEGLQETTGVLHGEMPPKSVVIEENGVKISVDIVGGHKTGFYLDQRDSRQQAMKYVKDKEVLNCFSYTGGFGLYALKGGAKRVINADVSQPALDTAKFNAELNEFDISKKRAVFLNADVFKLLREYRDQGTKFDVVIMDPPKFAESKAQLNGACRGYKDINMLAFEILKSGGTLLTYSCSGLMDLALFQKIIADAAVDAGRTVKFVERFEQAADHPVDTAYPEGFYLKGFACKVI</sequence>
<reference key="1">
    <citation type="submission" date="2002-12" db="EMBL/GenBank/DDBJ databases">
        <title>Complete genome sequence of Vibrio vulnificus CMCP6.</title>
        <authorList>
            <person name="Rhee J.H."/>
            <person name="Kim S.Y."/>
            <person name="Chung S.S."/>
            <person name="Kim J.J."/>
            <person name="Moon Y.H."/>
            <person name="Jeong H."/>
            <person name="Choy H.E."/>
        </authorList>
    </citation>
    <scope>NUCLEOTIDE SEQUENCE [LARGE SCALE GENOMIC DNA]</scope>
    <source>
        <strain>CMCP6</strain>
    </source>
</reference>
<gene>
    <name evidence="1" type="primary">rlmI</name>
    <name type="ordered locus">VV1_2713</name>
</gene>
<organism>
    <name type="scientific">Vibrio vulnificus (strain CMCP6)</name>
    <dbReference type="NCBI Taxonomy" id="216895"/>
    <lineage>
        <taxon>Bacteria</taxon>
        <taxon>Pseudomonadati</taxon>
        <taxon>Pseudomonadota</taxon>
        <taxon>Gammaproteobacteria</taxon>
        <taxon>Vibrionales</taxon>
        <taxon>Vibrionaceae</taxon>
        <taxon>Vibrio</taxon>
    </lineage>
</organism>
<evidence type="ECO:0000255" key="1">
    <source>
        <dbReference type="HAMAP-Rule" id="MF_01857"/>
    </source>
</evidence>
<proteinExistence type="inferred from homology"/>
<keyword id="KW-0963">Cytoplasm</keyword>
<keyword id="KW-0489">Methyltransferase</keyword>
<keyword id="KW-0694">RNA-binding</keyword>
<keyword id="KW-0698">rRNA processing</keyword>
<keyword id="KW-0949">S-adenosyl-L-methionine</keyword>
<keyword id="KW-0808">Transferase</keyword>